<reference key="1">
    <citation type="journal article" date="2010" name="PLoS ONE">
        <title>The complete genome sequence of Cupriavidus metallidurans strain CH34, a master survivalist in harsh and anthropogenic environments.</title>
        <authorList>
            <person name="Janssen P.J."/>
            <person name="Van Houdt R."/>
            <person name="Moors H."/>
            <person name="Monsieurs P."/>
            <person name="Morin N."/>
            <person name="Michaux A."/>
            <person name="Benotmane M.A."/>
            <person name="Leys N."/>
            <person name="Vallaeys T."/>
            <person name="Lapidus A."/>
            <person name="Monchy S."/>
            <person name="Medigue C."/>
            <person name="Taghavi S."/>
            <person name="McCorkle S."/>
            <person name="Dunn J."/>
            <person name="van der Lelie D."/>
            <person name="Mergeay M."/>
        </authorList>
    </citation>
    <scope>NUCLEOTIDE SEQUENCE [LARGE SCALE GENOMIC DNA]</scope>
    <source>
        <strain>ATCC 43123 / DSM 2839 / NBRC 102507 / CH34</strain>
    </source>
</reference>
<keyword id="KW-0067">ATP-binding</keyword>
<keyword id="KW-0963">Cytoplasm</keyword>
<keyword id="KW-0418">Kinase</keyword>
<keyword id="KW-0547">Nucleotide-binding</keyword>
<keyword id="KW-0665">Pyrimidine biosynthesis</keyword>
<keyword id="KW-1185">Reference proteome</keyword>
<keyword id="KW-0808">Transferase</keyword>
<name>PYRH_CUPMC</name>
<feature type="chain" id="PRO_0000323932" description="Uridylate kinase">
    <location>
        <begin position="1"/>
        <end position="236"/>
    </location>
</feature>
<feature type="binding site" evidence="1">
    <location>
        <begin position="10"/>
        <end position="13"/>
    </location>
    <ligand>
        <name>ATP</name>
        <dbReference type="ChEBI" id="CHEBI:30616"/>
    </ligand>
</feature>
<feature type="binding site" evidence="1">
    <location>
        <position position="52"/>
    </location>
    <ligand>
        <name>UMP</name>
        <dbReference type="ChEBI" id="CHEBI:57865"/>
    </ligand>
</feature>
<feature type="binding site" evidence="1">
    <location>
        <position position="53"/>
    </location>
    <ligand>
        <name>ATP</name>
        <dbReference type="ChEBI" id="CHEBI:30616"/>
    </ligand>
</feature>
<feature type="binding site" evidence="1">
    <location>
        <position position="57"/>
    </location>
    <ligand>
        <name>ATP</name>
        <dbReference type="ChEBI" id="CHEBI:30616"/>
    </ligand>
</feature>
<feature type="binding site" evidence="1">
    <location>
        <position position="72"/>
    </location>
    <ligand>
        <name>UMP</name>
        <dbReference type="ChEBI" id="CHEBI:57865"/>
    </ligand>
</feature>
<feature type="binding site" evidence="1">
    <location>
        <begin position="133"/>
        <end position="140"/>
    </location>
    <ligand>
        <name>UMP</name>
        <dbReference type="ChEBI" id="CHEBI:57865"/>
    </ligand>
</feature>
<feature type="binding site" evidence="1">
    <location>
        <position position="160"/>
    </location>
    <ligand>
        <name>ATP</name>
        <dbReference type="ChEBI" id="CHEBI:30616"/>
    </ligand>
</feature>
<feature type="binding site" evidence="1">
    <location>
        <position position="166"/>
    </location>
    <ligand>
        <name>ATP</name>
        <dbReference type="ChEBI" id="CHEBI:30616"/>
    </ligand>
</feature>
<feature type="binding site" evidence="1">
    <location>
        <position position="169"/>
    </location>
    <ligand>
        <name>ATP</name>
        <dbReference type="ChEBI" id="CHEBI:30616"/>
    </ligand>
</feature>
<evidence type="ECO:0000255" key="1">
    <source>
        <dbReference type="HAMAP-Rule" id="MF_01220"/>
    </source>
</evidence>
<evidence type="ECO:0000305" key="2"/>
<protein>
    <recommendedName>
        <fullName evidence="1">Uridylate kinase</fullName>
        <shortName evidence="1">UK</shortName>
        <ecNumber evidence="1">2.7.4.22</ecNumber>
    </recommendedName>
    <alternativeName>
        <fullName evidence="1">Uridine monophosphate kinase</fullName>
        <shortName evidence="1">UMP kinase</shortName>
        <shortName evidence="1">UMPK</shortName>
    </alternativeName>
</protein>
<comment type="function">
    <text evidence="1">Catalyzes the reversible phosphorylation of UMP to UDP.</text>
</comment>
<comment type="catalytic activity">
    <reaction evidence="1">
        <text>UMP + ATP = UDP + ADP</text>
        <dbReference type="Rhea" id="RHEA:24400"/>
        <dbReference type="ChEBI" id="CHEBI:30616"/>
        <dbReference type="ChEBI" id="CHEBI:57865"/>
        <dbReference type="ChEBI" id="CHEBI:58223"/>
        <dbReference type="ChEBI" id="CHEBI:456216"/>
        <dbReference type="EC" id="2.7.4.22"/>
    </reaction>
</comment>
<comment type="activity regulation">
    <text evidence="1">Inhibited by UTP.</text>
</comment>
<comment type="pathway">
    <text evidence="1">Pyrimidine metabolism; CTP biosynthesis via de novo pathway; UDP from UMP (UMPK route): step 1/1.</text>
</comment>
<comment type="subunit">
    <text evidence="1">Homohexamer.</text>
</comment>
<comment type="subcellular location">
    <subcellularLocation>
        <location evidence="1">Cytoplasm</location>
    </subcellularLocation>
</comment>
<comment type="similarity">
    <text evidence="1">Belongs to the UMP kinase family.</text>
</comment>
<comment type="sequence caution" evidence="2">
    <conflict type="erroneous initiation">
        <sequence resource="EMBL-CDS" id="ABF08320"/>
    </conflict>
</comment>
<organism>
    <name type="scientific">Cupriavidus metallidurans (strain ATCC 43123 / DSM 2839 / NBRC 102507 / CH34)</name>
    <name type="common">Ralstonia metallidurans</name>
    <dbReference type="NCBI Taxonomy" id="266264"/>
    <lineage>
        <taxon>Bacteria</taxon>
        <taxon>Pseudomonadati</taxon>
        <taxon>Pseudomonadota</taxon>
        <taxon>Betaproteobacteria</taxon>
        <taxon>Burkholderiales</taxon>
        <taxon>Burkholderiaceae</taxon>
        <taxon>Cupriavidus</taxon>
    </lineage>
</organism>
<dbReference type="EC" id="2.7.4.22" evidence="1"/>
<dbReference type="EMBL" id="CP000352">
    <property type="protein sequence ID" value="ABF08320.1"/>
    <property type="status" value="ALT_INIT"/>
    <property type="molecule type" value="Genomic_DNA"/>
</dbReference>
<dbReference type="RefSeq" id="WP_008652269.1">
    <property type="nucleotide sequence ID" value="NC_007973.1"/>
</dbReference>
<dbReference type="SMR" id="Q1LNF6"/>
<dbReference type="STRING" id="266264.Rmet_1437"/>
<dbReference type="GeneID" id="60822194"/>
<dbReference type="KEGG" id="rme:Rmet_1437"/>
<dbReference type="eggNOG" id="COG0528">
    <property type="taxonomic scope" value="Bacteria"/>
</dbReference>
<dbReference type="HOGENOM" id="CLU_033861_0_0_4"/>
<dbReference type="UniPathway" id="UPA00159">
    <property type="reaction ID" value="UER00275"/>
</dbReference>
<dbReference type="Proteomes" id="UP000002429">
    <property type="component" value="Chromosome"/>
</dbReference>
<dbReference type="GO" id="GO:0005829">
    <property type="term" value="C:cytosol"/>
    <property type="evidence" value="ECO:0007669"/>
    <property type="project" value="TreeGrafter"/>
</dbReference>
<dbReference type="GO" id="GO:0005524">
    <property type="term" value="F:ATP binding"/>
    <property type="evidence" value="ECO:0007669"/>
    <property type="project" value="UniProtKB-KW"/>
</dbReference>
<dbReference type="GO" id="GO:0033862">
    <property type="term" value="F:UMP kinase activity"/>
    <property type="evidence" value="ECO:0007669"/>
    <property type="project" value="UniProtKB-EC"/>
</dbReference>
<dbReference type="GO" id="GO:0044210">
    <property type="term" value="P:'de novo' CTP biosynthetic process"/>
    <property type="evidence" value="ECO:0007669"/>
    <property type="project" value="UniProtKB-UniRule"/>
</dbReference>
<dbReference type="GO" id="GO:0006225">
    <property type="term" value="P:UDP biosynthetic process"/>
    <property type="evidence" value="ECO:0007669"/>
    <property type="project" value="TreeGrafter"/>
</dbReference>
<dbReference type="CDD" id="cd04254">
    <property type="entry name" value="AAK_UMPK-PyrH-Ec"/>
    <property type="match status" value="1"/>
</dbReference>
<dbReference type="FunFam" id="3.40.1160.10:FF:000001">
    <property type="entry name" value="Uridylate kinase"/>
    <property type="match status" value="1"/>
</dbReference>
<dbReference type="Gene3D" id="3.40.1160.10">
    <property type="entry name" value="Acetylglutamate kinase-like"/>
    <property type="match status" value="1"/>
</dbReference>
<dbReference type="HAMAP" id="MF_01220_B">
    <property type="entry name" value="PyrH_B"/>
    <property type="match status" value="1"/>
</dbReference>
<dbReference type="InterPro" id="IPR036393">
    <property type="entry name" value="AceGlu_kinase-like_sf"/>
</dbReference>
<dbReference type="InterPro" id="IPR001048">
    <property type="entry name" value="Asp/Glu/Uridylate_kinase"/>
</dbReference>
<dbReference type="InterPro" id="IPR011817">
    <property type="entry name" value="Uridylate_kinase"/>
</dbReference>
<dbReference type="InterPro" id="IPR015963">
    <property type="entry name" value="Uridylate_kinase_bac"/>
</dbReference>
<dbReference type="NCBIfam" id="TIGR02075">
    <property type="entry name" value="pyrH_bact"/>
    <property type="match status" value="1"/>
</dbReference>
<dbReference type="PANTHER" id="PTHR42833">
    <property type="entry name" value="URIDYLATE KINASE"/>
    <property type="match status" value="1"/>
</dbReference>
<dbReference type="PANTHER" id="PTHR42833:SF4">
    <property type="entry name" value="URIDYLATE KINASE PUMPKIN, CHLOROPLASTIC"/>
    <property type="match status" value="1"/>
</dbReference>
<dbReference type="Pfam" id="PF00696">
    <property type="entry name" value="AA_kinase"/>
    <property type="match status" value="1"/>
</dbReference>
<dbReference type="PIRSF" id="PIRSF005650">
    <property type="entry name" value="Uridylate_kin"/>
    <property type="match status" value="1"/>
</dbReference>
<dbReference type="SUPFAM" id="SSF53633">
    <property type="entry name" value="Carbamate kinase-like"/>
    <property type="match status" value="1"/>
</dbReference>
<gene>
    <name evidence="1" type="primary">pyrH</name>
    <name type="ordered locus">Rmet_1437</name>
</gene>
<proteinExistence type="inferred from homology"/>
<sequence length="236" mass="25187">MPAYKRVLLKLSGEALMGDDAFGINRATIEGMVNDIAEIVKLGVQVAVVIGGGNIFRGVAGGAAGMDRATADYMGMLATMMNALALQDAMRHASIEGRVQSALRMDQVVEPYIRPRAIRQLEEGKVVIFAAGTGNPFFTTDTAAALRGSEIGAEIVLKATKVDGVYTADPKKDPSATRYTTISFDEAISRNLQVMDATAFALCRDQKLPIKVFSIVKPGALKRVILGEDEGTLVHV</sequence>
<accession>Q1LNF6</accession>